<feature type="chain" id="PRO_0000327939" description="Serum response factor homolog B">
    <location>
        <begin position="1"/>
        <end position="467"/>
    </location>
</feature>
<feature type="domain" description="MADS-box" evidence="1">
    <location>
        <begin position="36"/>
        <end position="96"/>
    </location>
</feature>
<feature type="region of interest" description="Disordered" evidence="2">
    <location>
        <begin position="1"/>
        <end position="38"/>
    </location>
</feature>
<feature type="region of interest" description="Disordered" evidence="2">
    <location>
        <begin position="115"/>
        <end position="245"/>
    </location>
</feature>
<feature type="region of interest" description="Disordered" evidence="2">
    <location>
        <begin position="301"/>
        <end position="467"/>
    </location>
</feature>
<feature type="compositionally biased region" description="Polar residues" evidence="2">
    <location>
        <begin position="1"/>
        <end position="15"/>
    </location>
</feature>
<feature type="compositionally biased region" description="Low complexity" evidence="2">
    <location>
        <begin position="128"/>
        <end position="205"/>
    </location>
</feature>
<feature type="compositionally biased region" description="Basic and acidic residues" evidence="2">
    <location>
        <begin position="206"/>
        <end position="220"/>
    </location>
</feature>
<feature type="compositionally biased region" description="Low complexity" evidence="2">
    <location>
        <begin position="222"/>
        <end position="245"/>
    </location>
</feature>
<feature type="compositionally biased region" description="Low complexity" evidence="2">
    <location>
        <begin position="301"/>
        <end position="334"/>
    </location>
</feature>
<feature type="compositionally biased region" description="Low complexity" evidence="2">
    <location>
        <begin position="347"/>
        <end position="392"/>
    </location>
</feature>
<feature type="compositionally biased region" description="Low complexity" evidence="2">
    <location>
        <begin position="401"/>
        <end position="440"/>
    </location>
</feature>
<feature type="compositionally biased region" description="Polar residues" evidence="2">
    <location>
        <begin position="442"/>
        <end position="467"/>
    </location>
</feature>
<comment type="subcellular location">
    <subcellularLocation>
        <location evidence="1">Nucleus</location>
    </subcellularLocation>
</comment>
<keyword id="KW-0238">DNA-binding</keyword>
<keyword id="KW-0539">Nucleus</keyword>
<keyword id="KW-1185">Reference proteome</keyword>
<keyword id="KW-0804">Transcription</keyword>
<keyword id="KW-0805">Transcription regulation</keyword>
<reference key="1">
    <citation type="journal article" date="2005" name="Nature">
        <title>The genome of the social amoeba Dictyostelium discoideum.</title>
        <authorList>
            <person name="Eichinger L."/>
            <person name="Pachebat J.A."/>
            <person name="Gloeckner G."/>
            <person name="Rajandream M.A."/>
            <person name="Sucgang R."/>
            <person name="Berriman M."/>
            <person name="Song J."/>
            <person name="Olsen R."/>
            <person name="Szafranski K."/>
            <person name="Xu Q."/>
            <person name="Tunggal B."/>
            <person name="Kummerfeld S."/>
            <person name="Madera M."/>
            <person name="Konfortov B.A."/>
            <person name="Rivero F."/>
            <person name="Bankier A.T."/>
            <person name="Lehmann R."/>
            <person name="Hamlin N."/>
            <person name="Davies R."/>
            <person name="Gaudet P."/>
            <person name="Fey P."/>
            <person name="Pilcher K."/>
            <person name="Chen G."/>
            <person name="Saunders D."/>
            <person name="Sodergren E.J."/>
            <person name="Davis P."/>
            <person name="Kerhornou A."/>
            <person name="Nie X."/>
            <person name="Hall N."/>
            <person name="Anjard C."/>
            <person name="Hemphill L."/>
            <person name="Bason N."/>
            <person name="Farbrother P."/>
            <person name="Desany B."/>
            <person name="Just E."/>
            <person name="Morio T."/>
            <person name="Rost R."/>
            <person name="Churcher C.M."/>
            <person name="Cooper J."/>
            <person name="Haydock S."/>
            <person name="van Driessche N."/>
            <person name="Cronin A."/>
            <person name="Goodhead I."/>
            <person name="Muzny D.M."/>
            <person name="Mourier T."/>
            <person name="Pain A."/>
            <person name="Lu M."/>
            <person name="Harper D."/>
            <person name="Lindsay R."/>
            <person name="Hauser H."/>
            <person name="James K.D."/>
            <person name="Quiles M."/>
            <person name="Madan Babu M."/>
            <person name="Saito T."/>
            <person name="Buchrieser C."/>
            <person name="Wardroper A."/>
            <person name="Felder M."/>
            <person name="Thangavelu M."/>
            <person name="Johnson D."/>
            <person name="Knights A."/>
            <person name="Loulseged H."/>
            <person name="Mungall K.L."/>
            <person name="Oliver K."/>
            <person name="Price C."/>
            <person name="Quail M.A."/>
            <person name="Urushihara H."/>
            <person name="Hernandez J."/>
            <person name="Rabbinowitsch E."/>
            <person name="Steffen D."/>
            <person name="Sanders M."/>
            <person name="Ma J."/>
            <person name="Kohara Y."/>
            <person name="Sharp S."/>
            <person name="Simmonds M.N."/>
            <person name="Spiegler S."/>
            <person name="Tivey A."/>
            <person name="Sugano S."/>
            <person name="White B."/>
            <person name="Walker D."/>
            <person name="Woodward J.R."/>
            <person name="Winckler T."/>
            <person name="Tanaka Y."/>
            <person name="Shaulsky G."/>
            <person name="Schleicher M."/>
            <person name="Weinstock G.M."/>
            <person name="Rosenthal A."/>
            <person name="Cox E.C."/>
            <person name="Chisholm R.L."/>
            <person name="Gibbs R.A."/>
            <person name="Loomis W.F."/>
            <person name="Platzer M."/>
            <person name="Kay R.R."/>
            <person name="Williams J.G."/>
            <person name="Dear P.H."/>
            <person name="Noegel A.A."/>
            <person name="Barrell B.G."/>
            <person name="Kuspa A."/>
        </authorList>
    </citation>
    <scope>NUCLEOTIDE SEQUENCE [LARGE SCALE GENOMIC DNA]</scope>
    <source>
        <strain>AX4</strain>
    </source>
</reference>
<organism>
    <name type="scientific">Dictyostelium discoideum</name>
    <name type="common">Social amoeba</name>
    <dbReference type="NCBI Taxonomy" id="44689"/>
    <lineage>
        <taxon>Eukaryota</taxon>
        <taxon>Amoebozoa</taxon>
        <taxon>Evosea</taxon>
        <taxon>Eumycetozoa</taxon>
        <taxon>Dictyostelia</taxon>
        <taxon>Dictyosteliales</taxon>
        <taxon>Dictyosteliaceae</taxon>
        <taxon>Dictyostelium</taxon>
    </lineage>
</organism>
<protein>
    <recommendedName>
        <fullName>Serum response factor homolog B</fullName>
    </recommendedName>
</protein>
<sequence>MELNMNQYDNIESNDSPPTPSSPGEEGNVEKKEKKSGRRKINIEFIGDKSRRHITFSKRKSGIMKKAYELSTLTGTQVLLIVASETGHVYTFATPKLQPLITKQEGKTLIQACLNTPDVPPVSKDDGNNNNGNNSNNNNNSNNNNSSNNNNNGNNNNGNTNNNNGNNNNSNNNNSGNNNNNNNNNSYNNNNNNNNNNNNNNNNNNCKEEQNMNIPNERKSKNNINNNNNNQNNNQNNNQNNNNLTQPIQNLQLPLQQNIIAQQQQQLNQQAALQQQMTQQIDQKLYNLQLQQQQMQQQQQIQNISGGSGNNSNGYINGNGMNGNNNNNNNSNNIPEYGQVIIQSYRGSNSGGNNSSNNTSTNTNTNTNTNTNNNNNNSNSSNGNNSNNNSNNILPQNLTTPSPIISQPLPSIPSPSSSSSNIGNSGYSSPFSTSFSYGGYQQPFSRNYPLQSNIATNSTVSKAPSDL</sequence>
<proteinExistence type="inferred from homology"/>
<dbReference type="EMBL" id="AAFI02000047">
    <property type="protein sequence ID" value="EAL65997.1"/>
    <property type="molecule type" value="Genomic_DNA"/>
</dbReference>
<dbReference type="RefSeq" id="XP_639351.1">
    <property type="nucleotide sequence ID" value="XM_634259.1"/>
</dbReference>
<dbReference type="SMR" id="Q54RY6"/>
<dbReference type="STRING" id="44689.Q54RY6"/>
<dbReference type="GlyGen" id="Q54RY6">
    <property type="glycosylation" value="1 site"/>
</dbReference>
<dbReference type="PaxDb" id="44689-DDB0220492"/>
<dbReference type="EnsemblProtists" id="EAL65997">
    <property type="protein sequence ID" value="EAL65997"/>
    <property type="gene ID" value="DDB_G0282835"/>
</dbReference>
<dbReference type="GeneID" id="8623792"/>
<dbReference type="KEGG" id="ddi:DDB_G0282835"/>
<dbReference type="dictyBase" id="DDB_G0282835">
    <property type="gene designation" value="srfB"/>
</dbReference>
<dbReference type="VEuPathDB" id="AmoebaDB:DDB_G0282835"/>
<dbReference type="eggNOG" id="KOG0015">
    <property type="taxonomic scope" value="Eukaryota"/>
</dbReference>
<dbReference type="HOGENOM" id="CLU_585852_0_0_1"/>
<dbReference type="InParanoid" id="Q54RY6"/>
<dbReference type="Reactome" id="R-DDI-9031628">
    <property type="pathway name" value="NGF-stimulated transcription"/>
</dbReference>
<dbReference type="PRO" id="PR:Q54RY6"/>
<dbReference type="Proteomes" id="UP000002195">
    <property type="component" value="Chromosome 3"/>
</dbReference>
<dbReference type="GO" id="GO:0005634">
    <property type="term" value="C:nucleus"/>
    <property type="evidence" value="ECO:0007669"/>
    <property type="project" value="UniProtKB-SubCell"/>
</dbReference>
<dbReference type="GO" id="GO:0003700">
    <property type="term" value="F:DNA-binding transcription factor activity"/>
    <property type="evidence" value="ECO:0000250"/>
    <property type="project" value="dictyBase"/>
</dbReference>
<dbReference type="GO" id="GO:0000981">
    <property type="term" value="F:DNA-binding transcription factor activity, RNA polymerase II-specific"/>
    <property type="evidence" value="ECO:0000318"/>
    <property type="project" value="GO_Central"/>
</dbReference>
<dbReference type="GO" id="GO:0046983">
    <property type="term" value="F:protein dimerization activity"/>
    <property type="evidence" value="ECO:0007669"/>
    <property type="project" value="InterPro"/>
</dbReference>
<dbReference type="GO" id="GO:0000978">
    <property type="term" value="F:RNA polymerase II cis-regulatory region sequence-specific DNA binding"/>
    <property type="evidence" value="ECO:0000318"/>
    <property type="project" value="GO_Central"/>
</dbReference>
<dbReference type="GO" id="GO:0140582">
    <property type="term" value="P:adenylate cyclase-activating G protein-coupled cAMP receptor signaling pathway"/>
    <property type="evidence" value="ECO:0000315"/>
    <property type="project" value="dictyBase"/>
</dbReference>
<dbReference type="GO" id="GO:0031152">
    <property type="term" value="P:aggregation involved in sorocarp development"/>
    <property type="evidence" value="ECO:0000270"/>
    <property type="project" value="dictyBase"/>
</dbReference>
<dbReference type="GO" id="GO:0045944">
    <property type="term" value="P:positive regulation of transcription by RNA polymerase II"/>
    <property type="evidence" value="ECO:0000318"/>
    <property type="project" value="GO_Central"/>
</dbReference>
<dbReference type="GO" id="GO:0006355">
    <property type="term" value="P:regulation of DNA-templated transcription"/>
    <property type="evidence" value="ECO:0000250"/>
    <property type="project" value="dictyBase"/>
</dbReference>
<dbReference type="CDD" id="cd00266">
    <property type="entry name" value="MADS_SRF_like"/>
    <property type="match status" value="1"/>
</dbReference>
<dbReference type="FunFam" id="3.40.1810.10:FF:000002">
    <property type="entry name" value="Serum response factor b"/>
    <property type="match status" value="1"/>
</dbReference>
<dbReference type="Gene3D" id="3.40.1810.10">
    <property type="entry name" value="Transcription factor, MADS-box"/>
    <property type="match status" value="1"/>
</dbReference>
<dbReference type="InterPro" id="IPR033897">
    <property type="entry name" value="SRF-like_MADS-box"/>
</dbReference>
<dbReference type="InterPro" id="IPR002100">
    <property type="entry name" value="TF_MADSbox"/>
</dbReference>
<dbReference type="InterPro" id="IPR036879">
    <property type="entry name" value="TF_MADSbox_sf"/>
</dbReference>
<dbReference type="Pfam" id="PF00319">
    <property type="entry name" value="SRF-TF"/>
    <property type="match status" value="1"/>
</dbReference>
<dbReference type="PRINTS" id="PR00404">
    <property type="entry name" value="MADSDOMAIN"/>
</dbReference>
<dbReference type="SMART" id="SM00432">
    <property type="entry name" value="MADS"/>
    <property type="match status" value="1"/>
</dbReference>
<dbReference type="SUPFAM" id="SSF55455">
    <property type="entry name" value="SRF-like"/>
    <property type="match status" value="1"/>
</dbReference>
<dbReference type="PROSITE" id="PS00350">
    <property type="entry name" value="MADS_BOX_1"/>
    <property type="match status" value="1"/>
</dbReference>
<dbReference type="PROSITE" id="PS50066">
    <property type="entry name" value="MADS_BOX_2"/>
    <property type="match status" value="1"/>
</dbReference>
<evidence type="ECO:0000255" key="1">
    <source>
        <dbReference type="PROSITE-ProRule" id="PRU00251"/>
    </source>
</evidence>
<evidence type="ECO:0000256" key="2">
    <source>
        <dbReference type="SAM" id="MobiDB-lite"/>
    </source>
</evidence>
<name>SRFB_DICDI</name>
<gene>
    <name type="primary">srfB</name>
    <name type="ORF">DDB_G0282835</name>
</gene>
<accession>Q54RY6</accession>